<proteinExistence type="inferred from homology"/>
<feature type="chain" id="PRO_0000081987" description="Transformer-2 sex-determining protein">
    <location>
        <begin position="1"/>
        <end position="272"/>
    </location>
</feature>
<feature type="domain" description="RRM" evidence="2">
    <location>
        <begin position="105"/>
        <end position="183"/>
    </location>
</feature>
<feature type="region of interest" description="Disordered" evidence="3">
    <location>
        <begin position="21"/>
        <end position="102"/>
    </location>
</feature>
<feature type="region of interest" description="Disordered" evidence="3">
    <location>
        <begin position="182"/>
        <end position="272"/>
    </location>
</feature>
<feature type="region of interest" description="Linker">
    <location>
        <begin position="184"/>
        <end position="204"/>
    </location>
</feature>
<feature type="compositionally biased region" description="Low complexity" evidence="3">
    <location>
        <begin position="26"/>
        <end position="41"/>
    </location>
</feature>
<feature type="compositionally biased region" description="Basic and acidic residues" evidence="3">
    <location>
        <begin position="87"/>
        <end position="102"/>
    </location>
</feature>
<feature type="compositionally biased region" description="Basic and acidic residues" evidence="3">
    <location>
        <begin position="205"/>
        <end position="218"/>
    </location>
</feature>
<feature type="compositionally biased region" description="Basic residues" evidence="3">
    <location>
        <begin position="238"/>
        <end position="266"/>
    </location>
</feature>
<feature type="splice variant" id="VSP_020797" description="In isoform 179." evidence="4">
    <location>
        <begin position="1"/>
        <end position="93"/>
    </location>
</feature>
<feature type="splice variant" id="VSP_005903" description="In isoform 225." evidence="4">
    <location>
        <begin position="3"/>
        <end position="49"/>
    </location>
</feature>
<keyword id="KW-0025">Alternative splicing</keyword>
<keyword id="KW-0217">Developmental protein</keyword>
<keyword id="KW-0221">Differentiation</keyword>
<keyword id="KW-0597">Phosphoprotein</keyword>
<keyword id="KW-0694">RNA-binding</keyword>
<keyword id="KW-0726">Sexual differentiation</keyword>
<keyword id="KW-0744">Spermatogenesis</keyword>
<evidence type="ECO:0000250" key="1"/>
<evidence type="ECO:0000255" key="2">
    <source>
        <dbReference type="PROSITE-ProRule" id="PRU00176"/>
    </source>
</evidence>
<evidence type="ECO:0000256" key="3">
    <source>
        <dbReference type="SAM" id="MobiDB-lite"/>
    </source>
</evidence>
<evidence type="ECO:0000305" key="4"/>
<protein>
    <recommendedName>
        <fullName>Transformer-2 sex-determining protein</fullName>
    </recommendedName>
</protein>
<accession>O02008</accession>
<accession>O02009</accession>
<accession>Q6LCB6</accession>
<dbReference type="EMBL" id="U72682">
    <property type="protein sequence ID" value="AAB58112.1"/>
    <property type="molecule type" value="Genomic_DNA"/>
</dbReference>
<dbReference type="EMBL" id="U72682">
    <property type="protein sequence ID" value="AAB58113.1"/>
    <property type="molecule type" value="Genomic_DNA"/>
</dbReference>
<dbReference type="EMBL" id="U72682">
    <property type="protein sequence ID" value="AAB58114.1"/>
    <property type="molecule type" value="Genomic_DNA"/>
</dbReference>
<dbReference type="RefSeq" id="XP_002049699.2">
    <molecule id="O02008-1"/>
    <property type="nucleotide sequence ID" value="XM_002049663.4"/>
</dbReference>
<dbReference type="RefSeq" id="XP_015029822.1">
    <molecule id="O02008-2"/>
    <property type="nucleotide sequence ID" value="XM_015174336.3"/>
</dbReference>
<dbReference type="SMR" id="O02008"/>
<dbReference type="EnsemblMetazoa" id="FBtr0436703">
    <molecule id="O02008-2"/>
    <property type="protein sequence ID" value="FBpp0393580"/>
    <property type="gene ID" value="FBgn0015686"/>
</dbReference>
<dbReference type="EnsemblMetazoa" id="FBtr0444854">
    <molecule id="O02008-1"/>
    <property type="protein sequence ID" value="FBpp0401163"/>
    <property type="gene ID" value="FBgn0015686"/>
</dbReference>
<dbReference type="EnsemblMetazoa" id="XM_002049663.3">
    <molecule id="O02008-1"/>
    <property type="protein sequence ID" value="XP_002049699.2"/>
    <property type="gene ID" value="LOC6626623"/>
</dbReference>
<dbReference type="EnsemblMetazoa" id="XM_015174336.2">
    <molecule id="O02008-2"/>
    <property type="protein sequence ID" value="XP_015029822.1"/>
    <property type="gene ID" value="LOC6626623"/>
</dbReference>
<dbReference type="GeneID" id="6626623"/>
<dbReference type="KEGG" id="dvi:6626623"/>
<dbReference type="CTD" id="36619"/>
<dbReference type="eggNOG" id="KOG0118">
    <property type="taxonomic scope" value="Eukaryota"/>
</dbReference>
<dbReference type="OrthoDB" id="439808at2759"/>
<dbReference type="GO" id="GO:0003723">
    <property type="term" value="F:RNA binding"/>
    <property type="evidence" value="ECO:0007669"/>
    <property type="project" value="UniProtKB-KW"/>
</dbReference>
<dbReference type="GO" id="GO:0030154">
    <property type="term" value="P:cell differentiation"/>
    <property type="evidence" value="ECO:0007669"/>
    <property type="project" value="UniProtKB-KW"/>
</dbReference>
<dbReference type="GO" id="GO:0007548">
    <property type="term" value="P:sex differentiation"/>
    <property type="evidence" value="ECO:0007669"/>
    <property type="project" value="UniProtKB-KW"/>
</dbReference>
<dbReference type="GO" id="GO:0007283">
    <property type="term" value="P:spermatogenesis"/>
    <property type="evidence" value="ECO:0007669"/>
    <property type="project" value="UniProtKB-KW"/>
</dbReference>
<dbReference type="CDD" id="cd12363">
    <property type="entry name" value="RRM_TRA2"/>
    <property type="match status" value="1"/>
</dbReference>
<dbReference type="Gene3D" id="3.30.70.330">
    <property type="match status" value="1"/>
</dbReference>
<dbReference type="InterPro" id="IPR012677">
    <property type="entry name" value="Nucleotide-bd_a/b_plait_sf"/>
</dbReference>
<dbReference type="InterPro" id="IPR035979">
    <property type="entry name" value="RBD_domain_sf"/>
</dbReference>
<dbReference type="InterPro" id="IPR050441">
    <property type="entry name" value="RBM"/>
</dbReference>
<dbReference type="InterPro" id="IPR000504">
    <property type="entry name" value="RRM_dom"/>
</dbReference>
<dbReference type="PANTHER" id="PTHR48034">
    <property type="entry name" value="TRANSFORMER-2 SEX-DETERMINING PROTEIN-RELATED"/>
    <property type="match status" value="1"/>
</dbReference>
<dbReference type="Pfam" id="PF00076">
    <property type="entry name" value="RRM_1"/>
    <property type="match status" value="1"/>
</dbReference>
<dbReference type="SMART" id="SM00360">
    <property type="entry name" value="RRM"/>
    <property type="match status" value="1"/>
</dbReference>
<dbReference type="SUPFAM" id="SSF54928">
    <property type="entry name" value="RNA-binding domain, RBD"/>
    <property type="match status" value="1"/>
</dbReference>
<dbReference type="PROSITE" id="PS50102">
    <property type="entry name" value="RRM"/>
    <property type="match status" value="1"/>
</dbReference>
<sequence length="272" mass="31841">MSTGLVNAREKEYLHLHRIDKHKCSHSSATSSPSSAASSESSRTRQRRSDGEVYGSRHNNYKSSSQHRRRSRSGSDSPQVRHYSGRTSRDRQRMRQARDHPQASRCIGVFGLNTNTTQQKVRELFNKFGPIERIQMVIDAHTHRSRGFCFIYFENLGDARVAKDACTGMEVDGRRIRVDYSITQRAHTPTPGVYMGRPSRPLGRRSRERDYSTRDTSRSRRRHRDESSSVSPYDSNRRKYRSRHRYDRSRSRTRSYSRSRSPRKPVRVQSRY</sequence>
<gene>
    <name type="primary">tra2</name>
    <name type="synonym">tra-2</name>
</gene>
<name>TRA2_DROVI</name>
<reference key="1">
    <citation type="journal article" date="1997" name="Mol. Cell. Biol.">
        <title>Evolutionary conservation of regulatory strategies for the sex determination factor transformer-2.</title>
        <authorList>
            <person name="Chandler D."/>
            <person name="McGuffin M.E."/>
            <person name="Piskur J."/>
            <person name="Yao J."/>
            <person name="Baker B.S."/>
            <person name="Mattox W."/>
        </authorList>
    </citation>
    <scope>NUCLEOTIDE SEQUENCE [GENOMIC DNA]</scope>
    <scope>ALTERNATIVE SPLICING</scope>
</reference>
<comment type="function">
    <text evidence="1">Required for female sex determination in somatic cells and for spermatogenesis in male germ cells. Positive regulator of female-specific splicing and/or polyadenylation of doublesex (dsx) pre-mRNA. Splicing requires an enhancer complex, dsxRE (dsx repeat element: which contains six copies of a 13-nucleotide repeat and a purine-rich enhancer (PRE)). DsxRE is formed through cooperative interactions between tra, tra2 and the sr proteins, and these interactions require both the repeat sequences and PRE. PRE is required for specific binding of tra2 to the dsxRE. Protein-RNA and protein-protein interactions are involved in tra-2 dependent activation and repression of alternative splicing (By similarity).</text>
</comment>
<comment type="alternative products">
    <event type="alternative splicing"/>
    <isoform>
        <id>O02008-1</id>
        <name>272</name>
        <sequence type="displayed"/>
    </isoform>
    <isoform>
        <id>O02008-3</id>
        <name>179</name>
        <sequence type="described" ref="VSP_020797"/>
    </isoform>
    <isoform>
        <id>O02008-2</id>
        <name>225</name>
        <sequence type="described" ref="VSP_005903"/>
    </isoform>
</comment>
<comment type="domain">
    <text evidence="1">The RS2 (Arg/Ser-rich domain 2) and RNP-CS (ribonucleoprotein consensus sequence) domains are required for both male sterility and female-specific dsx splicing but the RS1 domain is dispensable.</text>
</comment>
<comment type="PTM">
    <text evidence="1">Extensively phosphorylated on serine residues in the RS domain.</text>
</comment>
<comment type="similarity">
    <text evidence="4">Belongs to the splicing factor SR family.</text>
</comment>
<organism>
    <name type="scientific">Drosophila virilis</name>
    <name type="common">Fruit fly</name>
    <dbReference type="NCBI Taxonomy" id="7244"/>
    <lineage>
        <taxon>Eukaryota</taxon>
        <taxon>Metazoa</taxon>
        <taxon>Ecdysozoa</taxon>
        <taxon>Arthropoda</taxon>
        <taxon>Hexapoda</taxon>
        <taxon>Insecta</taxon>
        <taxon>Pterygota</taxon>
        <taxon>Neoptera</taxon>
        <taxon>Endopterygota</taxon>
        <taxon>Diptera</taxon>
        <taxon>Brachycera</taxon>
        <taxon>Muscomorpha</taxon>
        <taxon>Ephydroidea</taxon>
        <taxon>Drosophilidae</taxon>
        <taxon>Drosophila</taxon>
    </lineage>
</organism>